<organism>
    <name type="scientific">Mesembryanthemum crystallinum</name>
    <name type="common">Common ice plant</name>
    <name type="synonym">Cryophytum crystallinum</name>
    <dbReference type="NCBI Taxonomy" id="3544"/>
    <lineage>
        <taxon>Eukaryota</taxon>
        <taxon>Viridiplantae</taxon>
        <taxon>Streptophyta</taxon>
        <taxon>Embryophyta</taxon>
        <taxon>Tracheophyta</taxon>
        <taxon>Spermatophyta</taxon>
        <taxon>Magnoliopsida</taxon>
        <taxon>eudicotyledons</taxon>
        <taxon>Gunneridae</taxon>
        <taxon>Pentapetalae</taxon>
        <taxon>Caryophyllales</taxon>
        <taxon>Aizoaceae</taxon>
        <taxon>Mesembryanthemum</taxon>
        <taxon>Mesembryanthemum subgen. Cryophytum</taxon>
    </lineage>
</organism>
<evidence type="ECO:0000250" key="1"/>
<evidence type="ECO:0000255" key="2"/>
<evidence type="ECO:0000305" key="3"/>
<protein>
    <recommendedName>
        <fullName>Aminomethyltransferase, mitochondrial</fullName>
        <ecNumber>2.1.2.10</ecNumber>
    </recommendedName>
    <alternativeName>
        <fullName>Glycine cleavage system T protein</fullName>
        <shortName>GCVT</shortName>
    </alternativeName>
</protein>
<sequence length="408" mass="44406">MRGGGLWQLGQSVTRRLAQAEKKVIARRCFASEADLKKTALYDFHVANGGKMVPFAGWSMPIQYKDSIMDSTINCRENGSLFDVAHMCGLSLKGKDCIPFLEKLVVGDIAGLAPGTGTLSVLTNEKGGAIDDTVITKVTDDHIYLVVNAGCREKDLAHIEEHMKAFKAKGGDVSWHIHDERSLLALQGPLAAPVLQHLTKEDLSKFYFGQFTFLDINGFPCYLTRTGYTGEDGFEISVPNEYAVDLAKAMLEKSEGKVRLTGRGARDSLRLEAGLCLYGNDLEQHITPIEAGLTWAVGKRRRAEGGFLGAEVILKQIADGPPQRRVGFISSGPPARGHSEIQNEKGESIGEITSGGFSPCLKKNIAMGYVKSGNHKAGTKVNILVRGKPYEGVVTKMPFVPTKYYKSP</sequence>
<name>GCST_MESCR</name>
<feature type="transit peptide" description="Mitochondrion" evidence="2">
    <location>
        <begin position="1"/>
        <end position="30"/>
    </location>
</feature>
<feature type="chain" id="PRO_0000010762" description="Aminomethyltransferase, mitochondrial">
    <location>
        <begin position="31"/>
        <end position="408"/>
    </location>
</feature>
<feature type="binding site" evidence="1">
    <location>
        <position position="235"/>
    </location>
    <ligand>
        <name>substrate</name>
    </ligand>
</feature>
<feature type="binding site" evidence="1">
    <location>
        <position position="266"/>
    </location>
    <ligand>
        <name>substrate</name>
    </ligand>
</feature>
<feature type="binding site" evidence="1">
    <location>
        <position position="404"/>
    </location>
    <ligand>
        <name>substrate</name>
    </ligand>
</feature>
<accession>P93256</accession>
<proteinExistence type="evidence at transcript level"/>
<comment type="function">
    <text evidence="1">The glycine cleavage system catalyzes the degradation of glycine.</text>
</comment>
<comment type="catalytic activity">
    <reaction>
        <text>N(6)-[(R)-S(8)-aminomethyldihydrolipoyl]-L-lysyl-[protein] + (6S)-5,6,7,8-tetrahydrofolate = N(6)-[(R)-dihydrolipoyl]-L-lysyl-[protein] + (6R)-5,10-methylene-5,6,7,8-tetrahydrofolate + NH4(+)</text>
        <dbReference type="Rhea" id="RHEA:16945"/>
        <dbReference type="Rhea" id="RHEA-COMP:10475"/>
        <dbReference type="Rhea" id="RHEA-COMP:10492"/>
        <dbReference type="ChEBI" id="CHEBI:15636"/>
        <dbReference type="ChEBI" id="CHEBI:28938"/>
        <dbReference type="ChEBI" id="CHEBI:57453"/>
        <dbReference type="ChEBI" id="CHEBI:83100"/>
        <dbReference type="ChEBI" id="CHEBI:83143"/>
        <dbReference type="EC" id="2.1.2.10"/>
    </reaction>
</comment>
<comment type="subunit">
    <text>The glycine cleavage system is composed of four proteins: P, T, L and H.</text>
</comment>
<comment type="subcellular location">
    <subcellularLocation>
        <location>Mitochondrion</location>
    </subcellularLocation>
</comment>
<comment type="similarity">
    <text evidence="3">Belongs to the GcvT family.</text>
</comment>
<keyword id="KW-0032">Aminotransferase</keyword>
<keyword id="KW-0496">Mitochondrion</keyword>
<keyword id="KW-0808">Transferase</keyword>
<keyword id="KW-0809">Transit peptide</keyword>
<dbReference type="EC" id="2.1.2.10"/>
<dbReference type="EMBL" id="U79769">
    <property type="protein sequence ID" value="AAB38502.1"/>
    <property type="molecule type" value="mRNA"/>
</dbReference>
<dbReference type="PIR" id="T12566">
    <property type="entry name" value="T12566"/>
</dbReference>
<dbReference type="SMR" id="P93256"/>
<dbReference type="GO" id="GO:0005960">
    <property type="term" value="C:glycine cleavage complex"/>
    <property type="evidence" value="ECO:0007669"/>
    <property type="project" value="InterPro"/>
</dbReference>
<dbReference type="GO" id="GO:0005739">
    <property type="term" value="C:mitochondrion"/>
    <property type="evidence" value="ECO:0007669"/>
    <property type="project" value="UniProtKB-SubCell"/>
</dbReference>
<dbReference type="GO" id="GO:0004047">
    <property type="term" value="F:aminomethyltransferase activity"/>
    <property type="evidence" value="ECO:0007669"/>
    <property type="project" value="UniProtKB-EC"/>
</dbReference>
<dbReference type="GO" id="GO:0008483">
    <property type="term" value="F:transaminase activity"/>
    <property type="evidence" value="ECO:0007669"/>
    <property type="project" value="UniProtKB-KW"/>
</dbReference>
<dbReference type="GO" id="GO:0006546">
    <property type="term" value="P:glycine catabolic process"/>
    <property type="evidence" value="ECO:0007669"/>
    <property type="project" value="InterPro"/>
</dbReference>
<dbReference type="FunFam" id="2.40.30.110:FF:000002">
    <property type="entry name" value="Aminomethyltransferase"/>
    <property type="match status" value="1"/>
</dbReference>
<dbReference type="FunFam" id="3.30.70.1400:FF:000001">
    <property type="entry name" value="Aminomethyltransferase"/>
    <property type="match status" value="1"/>
</dbReference>
<dbReference type="FunFam" id="4.10.1250.10:FF:000002">
    <property type="entry name" value="Aminomethyltransferase"/>
    <property type="match status" value="1"/>
</dbReference>
<dbReference type="Gene3D" id="2.40.30.110">
    <property type="entry name" value="Aminomethyltransferase beta-barrel domains"/>
    <property type="match status" value="1"/>
</dbReference>
<dbReference type="Gene3D" id="3.30.70.1400">
    <property type="entry name" value="Aminomethyltransferase beta-barrel domains"/>
    <property type="match status" value="1"/>
</dbReference>
<dbReference type="Gene3D" id="4.10.1250.10">
    <property type="entry name" value="Aminomethyltransferase fragment"/>
    <property type="match status" value="1"/>
</dbReference>
<dbReference type="Gene3D" id="3.30.1360.120">
    <property type="entry name" value="Probable tRNA modification gtpase trme, domain 1"/>
    <property type="match status" value="1"/>
</dbReference>
<dbReference type="InterPro" id="IPR006223">
    <property type="entry name" value="GCS_T"/>
</dbReference>
<dbReference type="InterPro" id="IPR013977">
    <property type="entry name" value="GCST_C"/>
</dbReference>
<dbReference type="InterPro" id="IPR006222">
    <property type="entry name" value="GCV_T_N"/>
</dbReference>
<dbReference type="InterPro" id="IPR028896">
    <property type="entry name" value="GcvT/YgfZ/DmdA"/>
</dbReference>
<dbReference type="InterPro" id="IPR029043">
    <property type="entry name" value="GcvT/YgfZ_C"/>
</dbReference>
<dbReference type="InterPro" id="IPR027266">
    <property type="entry name" value="TrmE/GcvT_dom1"/>
</dbReference>
<dbReference type="NCBIfam" id="TIGR00528">
    <property type="entry name" value="gcvT"/>
    <property type="match status" value="1"/>
</dbReference>
<dbReference type="NCBIfam" id="NF001567">
    <property type="entry name" value="PRK00389.1"/>
    <property type="match status" value="1"/>
</dbReference>
<dbReference type="PANTHER" id="PTHR43757">
    <property type="entry name" value="AMINOMETHYLTRANSFERASE"/>
    <property type="match status" value="1"/>
</dbReference>
<dbReference type="PANTHER" id="PTHR43757:SF2">
    <property type="entry name" value="AMINOMETHYLTRANSFERASE, MITOCHONDRIAL"/>
    <property type="match status" value="1"/>
</dbReference>
<dbReference type="Pfam" id="PF01571">
    <property type="entry name" value="GCV_T"/>
    <property type="match status" value="1"/>
</dbReference>
<dbReference type="Pfam" id="PF08669">
    <property type="entry name" value="GCV_T_C"/>
    <property type="match status" value="1"/>
</dbReference>
<dbReference type="PIRSF" id="PIRSF006487">
    <property type="entry name" value="GcvT"/>
    <property type="match status" value="1"/>
</dbReference>
<dbReference type="SUPFAM" id="SSF101790">
    <property type="entry name" value="Aminomethyltransferase beta-barrel domain"/>
    <property type="match status" value="1"/>
</dbReference>
<dbReference type="SUPFAM" id="SSF103025">
    <property type="entry name" value="Folate-binding domain"/>
    <property type="match status" value="1"/>
</dbReference>
<gene>
    <name type="primary">GDCST</name>
</gene>
<reference key="1">
    <citation type="submission" date="1996-11" db="EMBL/GenBank/DDBJ databases">
        <authorList>
            <person name="Michalowski C.B."/>
            <person name="Bohnert H.J."/>
        </authorList>
    </citation>
    <scope>NUCLEOTIDE SEQUENCE [MRNA]</scope>
</reference>